<dbReference type="EC" id="3.6.4.13"/>
<dbReference type="EMBL" id="CU329672">
    <property type="protein sequence ID" value="CAA20777.2"/>
    <property type="molecule type" value="Genomic_DNA"/>
</dbReference>
<dbReference type="PIR" id="T41111">
    <property type="entry name" value="T41111"/>
</dbReference>
<dbReference type="RefSeq" id="NP_588411.2">
    <property type="nucleotide sequence ID" value="NM_001023402.2"/>
</dbReference>
<dbReference type="BioGRID" id="275818">
    <property type="interactions" value="288"/>
</dbReference>
<dbReference type="ComplexPortal" id="CPX-25780">
    <property type="entry name" value="RNA-directed RNA polymerase complex"/>
</dbReference>
<dbReference type="DIP" id="DIP-29303N"/>
<dbReference type="FunCoup" id="O74465">
    <property type="interactions" value="7"/>
</dbReference>
<dbReference type="IntAct" id="O74465">
    <property type="interactions" value="3"/>
</dbReference>
<dbReference type="STRING" id="284812.O74465"/>
<dbReference type="iPTMnet" id="O74465"/>
<dbReference type="PaxDb" id="4896-SPCC1739.03.1"/>
<dbReference type="EnsemblFungi" id="SPCC1739.03.1">
    <property type="protein sequence ID" value="SPCC1739.03.1:pep"/>
    <property type="gene ID" value="SPCC1739.03"/>
</dbReference>
<dbReference type="GeneID" id="2539248"/>
<dbReference type="KEGG" id="spo:2539248"/>
<dbReference type="PomBase" id="SPCC1739.03">
    <property type="gene designation" value="hrr1"/>
</dbReference>
<dbReference type="VEuPathDB" id="FungiDB:SPCC1739.03"/>
<dbReference type="eggNOG" id="KOG1807">
    <property type="taxonomic scope" value="Eukaryota"/>
</dbReference>
<dbReference type="HOGENOM" id="CLU_001066_2_0_1"/>
<dbReference type="InParanoid" id="O74465"/>
<dbReference type="OMA" id="EWIMVEA"/>
<dbReference type="PRO" id="PR:O74465"/>
<dbReference type="Proteomes" id="UP000002485">
    <property type="component" value="Chromosome III"/>
</dbReference>
<dbReference type="GO" id="GO:0005829">
    <property type="term" value="C:cytosol"/>
    <property type="evidence" value="ECO:0007005"/>
    <property type="project" value="PomBase"/>
</dbReference>
<dbReference type="GO" id="GO:0031380">
    <property type="term" value="C:nuclear RNA-directed RNA polymerase complex"/>
    <property type="evidence" value="ECO:0000314"/>
    <property type="project" value="PomBase"/>
</dbReference>
<dbReference type="GO" id="GO:0005634">
    <property type="term" value="C:nucleus"/>
    <property type="evidence" value="ECO:0000314"/>
    <property type="project" value="PomBase"/>
</dbReference>
<dbReference type="GO" id="GO:0031379">
    <property type="term" value="C:RNA-directed RNA polymerase complex"/>
    <property type="evidence" value="ECO:0000314"/>
    <property type="project" value="PomBase"/>
</dbReference>
<dbReference type="GO" id="GO:0005524">
    <property type="term" value="F:ATP binding"/>
    <property type="evidence" value="ECO:0007669"/>
    <property type="project" value="UniProtKB-KW"/>
</dbReference>
<dbReference type="GO" id="GO:0016887">
    <property type="term" value="F:ATP hydrolysis activity"/>
    <property type="evidence" value="ECO:0007669"/>
    <property type="project" value="RHEA"/>
</dbReference>
<dbReference type="GO" id="GO:0106222">
    <property type="term" value="F:lncRNA binding"/>
    <property type="evidence" value="ECO:0000314"/>
    <property type="project" value="PomBase"/>
</dbReference>
<dbReference type="GO" id="GO:0003723">
    <property type="term" value="F:RNA binding"/>
    <property type="evidence" value="ECO:0000318"/>
    <property type="project" value="GO_Central"/>
</dbReference>
<dbReference type="GO" id="GO:0003724">
    <property type="term" value="F:RNA helicase activity"/>
    <property type="evidence" value="ECO:0000304"/>
    <property type="project" value="PomBase"/>
</dbReference>
<dbReference type="GO" id="GO:0007059">
    <property type="term" value="P:chromosome segregation"/>
    <property type="evidence" value="ECO:0007669"/>
    <property type="project" value="UniProtKB-KW"/>
</dbReference>
<dbReference type="GO" id="GO:0031048">
    <property type="term" value="P:regulatory ncRNA-mediated heterochromatin formation"/>
    <property type="evidence" value="ECO:0000318"/>
    <property type="project" value="GO_Central"/>
</dbReference>
<dbReference type="GO" id="GO:0140727">
    <property type="term" value="P:siRNA-mediated pericentric heterochromatin formation"/>
    <property type="evidence" value="ECO:0000315"/>
    <property type="project" value="PomBase"/>
</dbReference>
<dbReference type="CDD" id="cd18808">
    <property type="entry name" value="SF1_C_Upf1"/>
    <property type="match status" value="1"/>
</dbReference>
<dbReference type="Gene3D" id="3.40.50.300">
    <property type="entry name" value="P-loop containing nucleotide triphosphate hydrolases"/>
    <property type="match status" value="2"/>
</dbReference>
<dbReference type="InterPro" id="IPR045055">
    <property type="entry name" value="DNA2/NAM7-like"/>
</dbReference>
<dbReference type="InterPro" id="IPR041679">
    <property type="entry name" value="DNA2/NAM7-like_C"/>
</dbReference>
<dbReference type="InterPro" id="IPR041677">
    <property type="entry name" value="DNA2/NAM7_AAA_11"/>
</dbReference>
<dbReference type="InterPro" id="IPR027417">
    <property type="entry name" value="P-loop_NTPase"/>
</dbReference>
<dbReference type="InterPro" id="IPR047187">
    <property type="entry name" value="SF1_C_Upf1"/>
</dbReference>
<dbReference type="PANTHER" id="PTHR10887">
    <property type="entry name" value="DNA2/NAM7 HELICASE FAMILY"/>
    <property type="match status" value="1"/>
</dbReference>
<dbReference type="PANTHER" id="PTHR10887:SF341">
    <property type="entry name" value="NFX1-TYPE ZINC FINGER-CONTAINING PROTEIN 1"/>
    <property type="match status" value="1"/>
</dbReference>
<dbReference type="Pfam" id="PF13086">
    <property type="entry name" value="AAA_11"/>
    <property type="match status" value="2"/>
</dbReference>
<dbReference type="Pfam" id="PF13087">
    <property type="entry name" value="AAA_12"/>
    <property type="match status" value="1"/>
</dbReference>
<dbReference type="Pfam" id="PF25396">
    <property type="entry name" value="ZNFX1"/>
    <property type="match status" value="1"/>
</dbReference>
<dbReference type="SUPFAM" id="SSF52540">
    <property type="entry name" value="P-loop containing nucleoside triphosphate hydrolases"/>
    <property type="match status" value="1"/>
</dbReference>
<comment type="function">
    <text evidence="3">Has a role in the RNA interference (RNAi) pathway which is important for heterochromatin formation and accurate chromosome segregation. A member of the RNA-directed RNA polymerase complex (RDRC) which is involved in the generation of small interfering RNAs (siRNAs) and mediate their association with the RNA-induced transcriptional silencing (RITS) complex. RITS acts as a priming complex for dsRNA synthesis at the site of non-coding centromeric RNA.</text>
</comment>
<comment type="catalytic activity">
    <reaction>
        <text>ATP + H2O = ADP + phosphate + H(+)</text>
        <dbReference type="Rhea" id="RHEA:13065"/>
        <dbReference type="ChEBI" id="CHEBI:15377"/>
        <dbReference type="ChEBI" id="CHEBI:15378"/>
        <dbReference type="ChEBI" id="CHEBI:30616"/>
        <dbReference type="ChEBI" id="CHEBI:43474"/>
        <dbReference type="ChEBI" id="CHEBI:456216"/>
        <dbReference type="EC" id="3.6.4.13"/>
    </reaction>
</comment>
<comment type="subunit">
    <text evidence="3">Cid12, hrr1 and rdp1 interact forming the RNA-directed RNA polymerase complex (RDRC). The RDRC complex interacts with the RITS complex via interaction between ago1 and hrr1. Clr4 has a role in mediating this interaction.</text>
</comment>
<comment type="interaction">
    <interactant intactId="EBI-15624169">
        <id>O74465</id>
    </interactant>
    <interactant intactId="EBI-15977565">
        <id>O94717</id>
        <label>ers1</label>
    </interactant>
    <organismsDiffer>false</organismsDiffer>
    <experiments>4</experiments>
</comment>
<comment type="interaction">
    <interactant intactId="EBI-15624169">
        <id>O74465</id>
    </interactant>
    <interactant intactId="EBI-423002">
        <id>O94687</id>
        <label>tas3</label>
    </interactant>
    <organismsDiffer>false</organismsDiffer>
    <experiments>2</experiments>
</comment>
<comment type="subcellular location">
    <subcellularLocation>
        <location>Cytoplasm</location>
    </subcellularLocation>
    <subcellularLocation>
        <location>Nucleus</location>
    </subcellularLocation>
</comment>
<sequence length="999" mass="114625">MEQVQDEIWKLSTLDAWEMVNKNTEVVFDEIPEPETLSEMKRHPLYSNIFNADNNTTSFTEQIETSETSKTQDSEGNKVDKNLKENKSIRRKRSIDNDYELSNVKRNDITSGKNREFENEHHPASDTSSWRELPSIPTLEELTSKSVELPSNNIYGGYKSFEDYLSIHYRLLREDAVSPLRESVLRYKVNPNYITGSSLAVYDHVRIDGYTISSSVIAAKLSFSVRAKKKIKWATSRRLISGSLVLLSNDDFQTFRIGTVCARPLSGLNKHPHEIDVKFEDISISLDPREEYVMIEATSGYWEAYKHVLRSLQRLSASTFPMKDYLVHCKSNQETAKHIQNNPRIRINSILKNNSQKIVNALEPFGPGEYILDSSQLKAYQSMLTKRLSIIQGPPGTGKSFVTLKAIETLLENTHSHVLPILVACQTNHAVDQILIRLLHQGASVMRLGSRTKDPEIAAVTIFQKAKHTKHSFKAAYNEIRHKKQRLIKQITNIMHNFNLEFVTLSYLHSKGIITTSQLESLRNNTEWISSVAENGEKTEEELISIWLGDAKVELITPSEITDGFEEELQIDPEKLEEIQKEAEDSGALMEEELRGKFINLRCKYLFSKLTTLHEKEIDTLLTIPNIWDIPEYSRGIIYCRWLESAYAAAEKELNRLYRFYLKVDRERIGFSNKRAAILLRGANVIGMTTTGLNKYRDILERINPKICFIEEAADVLEGPIIPAVFPSLEQLVLIGDHKQLRPGCSTYALRQDPFNLSISMFERLVENDMEYTRLTMQRRMHPQIRRLVSSVYEDLSDYEITKYWPSIPGMGEIRRFFLTHSRIEDNDGFASKINLFEAQMLVQFAVYLINNGVEPQKITCLTFYAAQKDLIERLLSESLNREKHFIKVATVDGYQGEENDVVLLSLVRNNDRTEVGFLSSPHRVCVSLSRARRGLFIFGNAQLVAESNPLWWDAINTLMNDETIQGLGDHLPLFTKDGTIYVNDPVELLDVNMRLTRK</sequence>
<keyword id="KW-0067">ATP-binding</keyword>
<keyword id="KW-0131">Cell cycle</keyword>
<keyword id="KW-0159">Chromosome partition</keyword>
<keyword id="KW-0963">Cytoplasm</keyword>
<keyword id="KW-0347">Helicase</keyword>
<keyword id="KW-0378">Hydrolase</keyword>
<keyword id="KW-0547">Nucleotide-binding</keyword>
<keyword id="KW-0539">Nucleus</keyword>
<keyword id="KW-0597">Phosphoprotein</keyword>
<keyword id="KW-1185">Reference proteome</keyword>
<keyword id="KW-0694">RNA-binding</keyword>
<keyword id="KW-0943">RNA-mediated gene silencing</keyword>
<name>HRR1_SCHPO</name>
<evidence type="ECO:0000255" key="1"/>
<evidence type="ECO:0000256" key="2">
    <source>
        <dbReference type="SAM" id="MobiDB-lite"/>
    </source>
</evidence>
<evidence type="ECO:0000269" key="3">
    <source>
    </source>
</evidence>
<evidence type="ECO:0000269" key="4">
    <source>
    </source>
</evidence>
<proteinExistence type="evidence at protein level"/>
<protein>
    <recommendedName>
        <fullName>Helicase required for RNAi-mediated heterochromatin assembly 1</fullName>
        <ecNumber>3.6.4.13</ecNumber>
    </recommendedName>
</protein>
<feature type="chain" id="PRO_0000256155" description="Helicase required for RNAi-mediated heterochromatin assembly 1">
    <location>
        <begin position="1"/>
        <end position="999"/>
    </location>
</feature>
<feature type="region of interest" description="Disordered" evidence="2">
    <location>
        <begin position="61"/>
        <end position="90"/>
    </location>
</feature>
<feature type="region of interest" description="Disordered" evidence="2">
    <location>
        <begin position="106"/>
        <end position="131"/>
    </location>
</feature>
<feature type="compositionally biased region" description="Basic and acidic residues" evidence="2">
    <location>
        <begin position="70"/>
        <end position="88"/>
    </location>
</feature>
<feature type="compositionally biased region" description="Basic and acidic residues" evidence="2">
    <location>
        <begin position="106"/>
        <end position="124"/>
    </location>
</feature>
<feature type="binding site" evidence="1">
    <location>
        <begin position="393"/>
        <end position="400"/>
    </location>
    <ligand>
        <name>ATP</name>
        <dbReference type="ChEBI" id="CHEBI:30616"/>
    </ligand>
</feature>
<feature type="modified residue" description="Phosphoserine" evidence="4">
    <location>
        <position position="94"/>
    </location>
</feature>
<reference key="1">
    <citation type="journal article" date="2002" name="Nature">
        <title>The genome sequence of Schizosaccharomyces pombe.</title>
        <authorList>
            <person name="Wood V."/>
            <person name="Gwilliam R."/>
            <person name="Rajandream M.A."/>
            <person name="Lyne M.H."/>
            <person name="Lyne R."/>
            <person name="Stewart A."/>
            <person name="Sgouros J.G."/>
            <person name="Peat N."/>
            <person name="Hayles J."/>
            <person name="Baker S.G."/>
            <person name="Basham D."/>
            <person name="Bowman S."/>
            <person name="Brooks K."/>
            <person name="Brown D."/>
            <person name="Brown S."/>
            <person name="Chillingworth T."/>
            <person name="Churcher C.M."/>
            <person name="Collins M."/>
            <person name="Connor R."/>
            <person name="Cronin A."/>
            <person name="Davis P."/>
            <person name="Feltwell T."/>
            <person name="Fraser A."/>
            <person name="Gentles S."/>
            <person name="Goble A."/>
            <person name="Hamlin N."/>
            <person name="Harris D.E."/>
            <person name="Hidalgo J."/>
            <person name="Hodgson G."/>
            <person name="Holroyd S."/>
            <person name="Hornsby T."/>
            <person name="Howarth S."/>
            <person name="Huckle E.J."/>
            <person name="Hunt S."/>
            <person name="Jagels K."/>
            <person name="James K.D."/>
            <person name="Jones L."/>
            <person name="Jones M."/>
            <person name="Leather S."/>
            <person name="McDonald S."/>
            <person name="McLean J."/>
            <person name="Mooney P."/>
            <person name="Moule S."/>
            <person name="Mungall K.L."/>
            <person name="Murphy L.D."/>
            <person name="Niblett D."/>
            <person name="Odell C."/>
            <person name="Oliver K."/>
            <person name="O'Neil S."/>
            <person name="Pearson D."/>
            <person name="Quail M.A."/>
            <person name="Rabbinowitsch E."/>
            <person name="Rutherford K.M."/>
            <person name="Rutter S."/>
            <person name="Saunders D."/>
            <person name="Seeger K."/>
            <person name="Sharp S."/>
            <person name="Skelton J."/>
            <person name="Simmonds M.N."/>
            <person name="Squares R."/>
            <person name="Squares S."/>
            <person name="Stevens K."/>
            <person name="Taylor K."/>
            <person name="Taylor R.G."/>
            <person name="Tivey A."/>
            <person name="Walsh S.V."/>
            <person name="Warren T."/>
            <person name="Whitehead S."/>
            <person name="Woodward J.R."/>
            <person name="Volckaert G."/>
            <person name="Aert R."/>
            <person name="Robben J."/>
            <person name="Grymonprez B."/>
            <person name="Weltjens I."/>
            <person name="Vanstreels E."/>
            <person name="Rieger M."/>
            <person name="Schaefer M."/>
            <person name="Mueller-Auer S."/>
            <person name="Gabel C."/>
            <person name="Fuchs M."/>
            <person name="Duesterhoeft A."/>
            <person name="Fritzc C."/>
            <person name="Holzer E."/>
            <person name="Moestl D."/>
            <person name="Hilbert H."/>
            <person name="Borzym K."/>
            <person name="Langer I."/>
            <person name="Beck A."/>
            <person name="Lehrach H."/>
            <person name="Reinhardt R."/>
            <person name="Pohl T.M."/>
            <person name="Eger P."/>
            <person name="Zimmermann W."/>
            <person name="Wedler H."/>
            <person name="Wambutt R."/>
            <person name="Purnelle B."/>
            <person name="Goffeau A."/>
            <person name="Cadieu E."/>
            <person name="Dreano S."/>
            <person name="Gloux S."/>
            <person name="Lelaure V."/>
            <person name="Mottier S."/>
            <person name="Galibert F."/>
            <person name="Aves S.J."/>
            <person name="Xiang Z."/>
            <person name="Hunt C."/>
            <person name="Moore K."/>
            <person name="Hurst S.M."/>
            <person name="Lucas M."/>
            <person name="Rochet M."/>
            <person name="Gaillardin C."/>
            <person name="Tallada V.A."/>
            <person name="Garzon A."/>
            <person name="Thode G."/>
            <person name="Daga R.R."/>
            <person name="Cruzado L."/>
            <person name="Jimenez J."/>
            <person name="Sanchez M."/>
            <person name="del Rey F."/>
            <person name="Benito J."/>
            <person name="Dominguez A."/>
            <person name="Revuelta J.L."/>
            <person name="Moreno S."/>
            <person name="Armstrong J."/>
            <person name="Forsburg S.L."/>
            <person name="Cerutti L."/>
            <person name="Lowe T."/>
            <person name="McCombie W.R."/>
            <person name="Paulsen I."/>
            <person name="Potashkin J."/>
            <person name="Shpakovski G.V."/>
            <person name="Ussery D."/>
            <person name="Barrell B.G."/>
            <person name="Nurse P."/>
        </authorList>
    </citation>
    <scope>NUCLEOTIDE SEQUENCE [LARGE SCALE GENOMIC DNA]</scope>
    <source>
        <strain>972 / ATCC 24843</strain>
    </source>
</reference>
<reference key="2">
    <citation type="journal article" date="2011" name="Science">
        <title>Comparative functional genomics of the fission yeasts.</title>
        <authorList>
            <person name="Rhind N."/>
            <person name="Chen Z."/>
            <person name="Yassour M."/>
            <person name="Thompson D.A."/>
            <person name="Haas B.J."/>
            <person name="Habib N."/>
            <person name="Wapinski I."/>
            <person name="Roy S."/>
            <person name="Lin M.F."/>
            <person name="Heiman D.I."/>
            <person name="Young S.K."/>
            <person name="Furuya K."/>
            <person name="Guo Y."/>
            <person name="Pidoux A."/>
            <person name="Chen H.M."/>
            <person name="Robbertse B."/>
            <person name="Goldberg J.M."/>
            <person name="Aoki K."/>
            <person name="Bayne E.H."/>
            <person name="Berlin A.M."/>
            <person name="Desjardins C.A."/>
            <person name="Dobbs E."/>
            <person name="Dukaj L."/>
            <person name="Fan L."/>
            <person name="FitzGerald M.G."/>
            <person name="French C."/>
            <person name="Gujja S."/>
            <person name="Hansen K."/>
            <person name="Keifenheim D."/>
            <person name="Levin J.Z."/>
            <person name="Mosher R.A."/>
            <person name="Mueller C.A."/>
            <person name="Pfiffner J."/>
            <person name="Priest M."/>
            <person name="Russ C."/>
            <person name="Smialowska A."/>
            <person name="Swoboda P."/>
            <person name="Sykes S.M."/>
            <person name="Vaughn M."/>
            <person name="Vengrova S."/>
            <person name="Yoder R."/>
            <person name="Zeng Q."/>
            <person name="Allshire R."/>
            <person name="Baulcombe D."/>
            <person name="Birren B.W."/>
            <person name="Brown W."/>
            <person name="Ekwall K."/>
            <person name="Kellis M."/>
            <person name="Leatherwood J."/>
            <person name="Levin H."/>
            <person name="Margalit H."/>
            <person name="Martienssen R."/>
            <person name="Nieduszynski C.A."/>
            <person name="Spatafora J.W."/>
            <person name="Friedman N."/>
            <person name="Dalgaard J.Z."/>
            <person name="Baumann P."/>
            <person name="Niki H."/>
            <person name="Regev A."/>
            <person name="Nusbaum C."/>
        </authorList>
    </citation>
    <scope>REVISION OF GENE MODEL</scope>
</reference>
<reference key="3">
    <citation type="journal article" date="2004" name="Cell">
        <title>Two RNAi complexes, RITS and RDRC, physically interact and localize to noncoding centromeric RNAs.</title>
        <authorList>
            <person name="Motamedi M.R."/>
            <person name="Verdel A."/>
            <person name="Colmenares S.U."/>
            <person name="Gerber S.A."/>
            <person name="Gygi S.P."/>
            <person name="Moazed D."/>
        </authorList>
    </citation>
    <scope>FUNCTION</scope>
    <scope>COMPOSITION OF THE RDRC AND RITS COMPLEXES</scope>
    <scope>INTERACTION WITH AGO1</scope>
    <scope>SUBCELLULAR LOCATION</scope>
    <scope>IDENTIFICATION BY MASS SPECTROMETRY</scope>
</reference>
<reference key="4">
    <citation type="journal article" date="2006" name="Nat. Biotechnol.">
        <title>ORFeome cloning and global analysis of protein localization in the fission yeast Schizosaccharomyces pombe.</title>
        <authorList>
            <person name="Matsuyama A."/>
            <person name="Arai R."/>
            <person name="Yashiroda Y."/>
            <person name="Shirai A."/>
            <person name="Kamata A."/>
            <person name="Sekido S."/>
            <person name="Kobayashi Y."/>
            <person name="Hashimoto A."/>
            <person name="Hamamoto M."/>
            <person name="Hiraoka Y."/>
            <person name="Horinouchi S."/>
            <person name="Yoshida M."/>
        </authorList>
    </citation>
    <scope>SUBCELLULAR LOCATION [LARGE SCALE ANALYSIS]</scope>
</reference>
<reference key="5">
    <citation type="journal article" date="2008" name="J. Proteome Res.">
        <title>Phosphoproteome analysis of fission yeast.</title>
        <authorList>
            <person name="Wilson-Grady J.T."/>
            <person name="Villen J."/>
            <person name="Gygi S.P."/>
        </authorList>
    </citation>
    <scope>PHOSPHORYLATION [LARGE SCALE ANALYSIS] AT SER-94</scope>
    <scope>IDENTIFICATION BY MASS SPECTROMETRY</scope>
</reference>
<gene>
    <name type="primary">hrr1</name>
    <name type="ORF">SPCC1739.03</name>
</gene>
<accession>O74465</accession>
<organism>
    <name type="scientific">Schizosaccharomyces pombe (strain 972 / ATCC 24843)</name>
    <name type="common">Fission yeast</name>
    <dbReference type="NCBI Taxonomy" id="284812"/>
    <lineage>
        <taxon>Eukaryota</taxon>
        <taxon>Fungi</taxon>
        <taxon>Dikarya</taxon>
        <taxon>Ascomycota</taxon>
        <taxon>Taphrinomycotina</taxon>
        <taxon>Schizosaccharomycetes</taxon>
        <taxon>Schizosaccharomycetales</taxon>
        <taxon>Schizosaccharomycetaceae</taxon>
        <taxon>Schizosaccharomyces</taxon>
    </lineage>
</organism>